<proteinExistence type="inferred from homology"/>
<evidence type="ECO:0000255" key="1">
    <source>
        <dbReference type="HAMAP-Rule" id="MF_00081"/>
    </source>
</evidence>
<name>HRCA_LACGA</name>
<keyword id="KW-0678">Repressor</keyword>
<keyword id="KW-0346">Stress response</keyword>
<keyword id="KW-0804">Transcription</keyword>
<keyword id="KW-0805">Transcription regulation</keyword>
<comment type="function">
    <text evidence="1">Negative regulator of class I heat shock genes (grpE-dnaK-dnaJ and groELS operons). Prevents heat-shock induction of these operons.</text>
</comment>
<comment type="similarity">
    <text evidence="1">Belongs to the HrcA family.</text>
</comment>
<sequence>MLTERQELILKTIIMDFTQSHEPVGSKTVMNQLPVKVSSATVRNEMAALEEKGLLEKTHSSSGRIPSTAGYRYYLDHLINPVKIPASVYNRIIYQLDQPFQQVNEIVQEAAKILSDLTNYTAFAAGPETRSVKVTGFRIVPLSSHQVMAILVTDDGNVKNQIYTLPHHTNGEEIEKAVRLINDQLVGKPLSSVNEVLLKRIADHLVAGGSAPEILDLLQDVIKDAASEQMYVDGQINLLSNYESDDLAKVKSLYKLIDQNDAISSLIGFNPKDEIKNDSKSKVQVKLGSELQSDLLEDYSLLTAQYSVGKYGKGTIALLGPTNMPYSQMIGLLEYFRNELAKKLLDYYGRFK</sequence>
<reference key="1">
    <citation type="journal article" date="2006" name="Proc. Natl. Acad. Sci. U.S.A.">
        <title>Comparative genomics of the lactic acid bacteria.</title>
        <authorList>
            <person name="Makarova K.S."/>
            <person name="Slesarev A."/>
            <person name="Wolf Y.I."/>
            <person name="Sorokin A."/>
            <person name="Mirkin B."/>
            <person name="Koonin E.V."/>
            <person name="Pavlov A."/>
            <person name="Pavlova N."/>
            <person name="Karamychev V."/>
            <person name="Polouchine N."/>
            <person name="Shakhova V."/>
            <person name="Grigoriev I."/>
            <person name="Lou Y."/>
            <person name="Rohksar D."/>
            <person name="Lucas S."/>
            <person name="Huang K."/>
            <person name="Goodstein D.M."/>
            <person name="Hawkins T."/>
            <person name="Plengvidhya V."/>
            <person name="Welker D."/>
            <person name="Hughes J."/>
            <person name="Goh Y."/>
            <person name="Benson A."/>
            <person name="Baldwin K."/>
            <person name="Lee J.-H."/>
            <person name="Diaz-Muniz I."/>
            <person name="Dosti B."/>
            <person name="Smeianov V."/>
            <person name="Wechter W."/>
            <person name="Barabote R."/>
            <person name="Lorca G."/>
            <person name="Altermann E."/>
            <person name="Barrangou R."/>
            <person name="Ganesan B."/>
            <person name="Xie Y."/>
            <person name="Rawsthorne H."/>
            <person name="Tamir D."/>
            <person name="Parker C."/>
            <person name="Breidt F."/>
            <person name="Broadbent J.R."/>
            <person name="Hutkins R."/>
            <person name="O'Sullivan D."/>
            <person name="Steele J."/>
            <person name="Unlu G."/>
            <person name="Saier M.H. Jr."/>
            <person name="Klaenhammer T."/>
            <person name="Richardson P."/>
            <person name="Kozyavkin S."/>
            <person name="Weimer B.C."/>
            <person name="Mills D.A."/>
        </authorList>
    </citation>
    <scope>NUCLEOTIDE SEQUENCE [LARGE SCALE GENOMIC DNA]</scope>
    <source>
        <strain>ATCC 33323 / DSM 20243 / BCRC 14619 / CIP 102991 / JCM 1131 / KCTC 3163 / NCIMB 11718 / NCTC 13722 / AM63</strain>
    </source>
</reference>
<protein>
    <recommendedName>
        <fullName evidence="1">Heat-inducible transcription repressor HrcA</fullName>
    </recommendedName>
</protein>
<accession>Q044B1</accession>
<dbReference type="EMBL" id="CP000413">
    <property type="protein sequence ID" value="ABJ60211.1"/>
    <property type="molecule type" value="Genomic_DNA"/>
</dbReference>
<dbReference type="RefSeq" id="WP_003647474.1">
    <property type="nucleotide sequence ID" value="NZ_WBMG01000005.1"/>
</dbReference>
<dbReference type="SMR" id="Q044B1"/>
<dbReference type="GeneID" id="29638570"/>
<dbReference type="KEGG" id="lga:LGAS_0820"/>
<dbReference type="HOGENOM" id="CLU_050019_1_0_9"/>
<dbReference type="BioCyc" id="LGAS324831:G1G6Y-814-MONOMER"/>
<dbReference type="Proteomes" id="UP000000664">
    <property type="component" value="Chromosome"/>
</dbReference>
<dbReference type="GO" id="GO:0003677">
    <property type="term" value="F:DNA binding"/>
    <property type="evidence" value="ECO:0007669"/>
    <property type="project" value="InterPro"/>
</dbReference>
<dbReference type="GO" id="GO:0045892">
    <property type="term" value="P:negative regulation of DNA-templated transcription"/>
    <property type="evidence" value="ECO:0007669"/>
    <property type="project" value="UniProtKB-UniRule"/>
</dbReference>
<dbReference type="Gene3D" id="3.30.450.40">
    <property type="match status" value="1"/>
</dbReference>
<dbReference type="Gene3D" id="3.30.390.60">
    <property type="entry name" value="Heat-inducible transcription repressor hrca homolog, domain 3"/>
    <property type="match status" value="1"/>
</dbReference>
<dbReference type="Gene3D" id="1.10.10.10">
    <property type="entry name" value="Winged helix-like DNA-binding domain superfamily/Winged helix DNA-binding domain"/>
    <property type="match status" value="1"/>
</dbReference>
<dbReference type="HAMAP" id="MF_00081">
    <property type="entry name" value="HrcA"/>
    <property type="match status" value="1"/>
</dbReference>
<dbReference type="InterPro" id="IPR029016">
    <property type="entry name" value="GAF-like_dom_sf"/>
</dbReference>
<dbReference type="InterPro" id="IPR002571">
    <property type="entry name" value="HrcA"/>
</dbReference>
<dbReference type="InterPro" id="IPR021153">
    <property type="entry name" value="HrcA_C"/>
</dbReference>
<dbReference type="InterPro" id="IPR036388">
    <property type="entry name" value="WH-like_DNA-bd_sf"/>
</dbReference>
<dbReference type="InterPro" id="IPR036390">
    <property type="entry name" value="WH_DNA-bd_sf"/>
</dbReference>
<dbReference type="InterPro" id="IPR023120">
    <property type="entry name" value="WHTH_transcript_rep_HrcA_IDD"/>
</dbReference>
<dbReference type="NCBIfam" id="TIGR00331">
    <property type="entry name" value="hrcA"/>
    <property type="match status" value="1"/>
</dbReference>
<dbReference type="PANTHER" id="PTHR34824">
    <property type="entry name" value="HEAT-INDUCIBLE TRANSCRIPTION REPRESSOR HRCA"/>
    <property type="match status" value="1"/>
</dbReference>
<dbReference type="PANTHER" id="PTHR34824:SF1">
    <property type="entry name" value="HEAT-INDUCIBLE TRANSCRIPTION REPRESSOR HRCA"/>
    <property type="match status" value="1"/>
</dbReference>
<dbReference type="Pfam" id="PF01628">
    <property type="entry name" value="HrcA"/>
    <property type="match status" value="1"/>
</dbReference>
<dbReference type="PIRSF" id="PIRSF005485">
    <property type="entry name" value="HrcA"/>
    <property type="match status" value="1"/>
</dbReference>
<dbReference type="SUPFAM" id="SSF55781">
    <property type="entry name" value="GAF domain-like"/>
    <property type="match status" value="1"/>
</dbReference>
<dbReference type="SUPFAM" id="SSF46785">
    <property type="entry name" value="Winged helix' DNA-binding domain"/>
    <property type="match status" value="1"/>
</dbReference>
<gene>
    <name evidence="1" type="primary">hrcA</name>
    <name type="ordered locus">LGAS_0820</name>
</gene>
<feature type="chain" id="PRO_1000010413" description="Heat-inducible transcription repressor HrcA">
    <location>
        <begin position="1"/>
        <end position="352"/>
    </location>
</feature>
<organism>
    <name type="scientific">Lactobacillus gasseri (strain ATCC 33323 / DSM 20243 / BCRC 14619 / CIP 102991 / JCM 1131 / KCTC 3163 / NCIMB 11718 / NCTC 13722 / AM63)</name>
    <dbReference type="NCBI Taxonomy" id="324831"/>
    <lineage>
        <taxon>Bacteria</taxon>
        <taxon>Bacillati</taxon>
        <taxon>Bacillota</taxon>
        <taxon>Bacilli</taxon>
        <taxon>Lactobacillales</taxon>
        <taxon>Lactobacillaceae</taxon>
        <taxon>Lactobacillus</taxon>
    </lineage>
</organism>